<keyword id="KW-0025">Alternative splicing</keyword>
<keyword id="KW-0963">Cytoplasm</keyword>
<keyword id="KW-0597">Phosphoprotein</keyword>
<keyword id="KW-1185">Reference proteome</keyword>
<keyword id="KW-0677">Repeat</keyword>
<keyword id="KW-0832">Ubl conjugation</keyword>
<keyword id="KW-0833">Ubl conjugation pathway</keyword>
<keyword id="KW-0853">WD repeat</keyword>
<sequence length="573" mass="64646">MDEGGLPLLPDSLVYQIFLSLGPADVLAAGLVCRQWQAVSRDEFLWKEQFYRYYQVARDVPRHPAATSWYEEFRRLYDMVPCVEVQTLKEHTDQVLHLSFSHSGYQFASCSKDCTVKIWNNDLTISLLHSADMRPYNWSYTQFSQFNQDDSLLLASGVFLGPHNSSSGEIAVISLDSFALLSRVRNKPYDVFGCWLTETSLISGNLHRIGDITSCSVLWLNNAFQDVESENVNVVKRLFKIQNLNASTIRTVMVADCSRFDSPDLLLDASDQAGLPCRVFDLGGDTEEEATDPGLHTSGSDHVKKGLRRVFDSVLDGHGQLSDCALETKVAELLAQGHTKPPECNDADTRNKYLIFTTGCLTYSPHQIGIKQILPHQMTTAGPVLGEGRGSDAFFDALDHVIDVHGHIIGMGLSPDNRYLYVNSRAWPPGSVVADPMQPPPIAEEIDLLVFDLKTMREVKRALRAHRAYTPNDECFFIFLDVSRDFVASGAEDRHGYIWDRHYNICLAKLRHEDVVNSVAFSPQEQELLLTASDDATIKAWRSPRIVRVLQAPRPRPRPRPRPFFSWFASHRR</sequence>
<accession>Q9QXW2</accession>
<accession>A2AJ36</accession>
<accession>A2AJ37</accession>
<accession>E9QMP0</accession>
<accession>Q3U368</accession>
<reference key="1">
    <citation type="journal article" date="1999" name="Curr. Biol.">
        <title>A family of mammalian F-box proteins.</title>
        <authorList>
            <person name="Winston J.T."/>
            <person name="Koepp D.M."/>
            <person name="Zhu C."/>
            <person name="Elledge S.J."/>
            <person name="Harper J.W."/>
        </authorList>
    </citation>
    <scope>NUCLEOTIDE SEQUENCE [MRNA] (ISOFORM 1)</scope>
    <scope>TISSUE SPECIFICITY</scope>
    <scope>INTERACTION WITH SKP1</scope>
</reference>
<reference key="2">
    <citation type="journal article" date="2005" name="Science">
        <title>The transcriptional landscape of the mammalian genome.</title>
        <authorList>
            <person name="Carninci P."/>
            <person name="Kasukawa T."/>
            <person name="Katayama S."/>
            <person name="Gough J."/>
            <person name="Frith M.C."/>
            <person name="Maeda N."/>
            <person name="Oyama R."/>
            <person name="Ravasi T."/>
            <person name="Lenhard B."/>
            <person name="Wells C."/>
            <person name="Kodzius R."/>
            <person name="Shimokawa K."/>
            <person name="Bajic V.B."/>
            <person name="Brenner S.E."/>
            <person name="Batalov S."/>
            <person name="Forrest A.R."/>
            <person name="Zavolan M."/>
            <person name="Davis M.J."/>
            <person name="Wilming L.G."/>
            <person name="Aidinis V."/>
            <person name="Allen J.E."/>
            <person name="Ambesi-Impiombato A."/>
            <person name="Apweiler R."/>
            <person name="Aturaliya R.N."/>
            <person name="Bailey T.L."/>
            <person name="Bansal M."/>
            <person name="Baxter L."/>
            <person name="Beisel K.W."/>
            <person name="Bersano T."/>
            <person name="Bono H."/>
            <person name="Chalk A.M."/>
            <person name="Chiu K.P."/>
            <person name="Choudhary V."/>
            <person name="Christoffels A."/>
            <person name="Clutterbuck D.R."/>
            <person name="Crowe M.L."/>
            <person name="Dalla E."/>
            <person name="Dalrymple B.P."/>
            <person name="de Bono B."/>
            <person name="Della Gatta G."/>
            <person name="di Bernardo D."/>
            <person name="Down T."/>
            <person name="Engstrom P."/>
            <person name="Fagiolini M."/>
            <person name="Faulkner G."/>
            <person name="Fletcher C.F."/>
            <person name="Fukushima T."/>
            <person name="Furuno M."/>
            <person name="Futaki S."/>
            <person name="Gariboldi M."/>
            <person name="Georgii-Hemming P."/>
            <person name="Gingeras T.R."/>
            <person name="Gojobori T."/>
            <person name="Green R.E."/>
            <person name="Gustincich S."/>
            <person name="Harbers M."/>
            <person name="Hayashi Y."/>
            <person name="Hensch T.K."/>
            <person name="Hirokawa N."/>
            <person name="Hill D."/>
            <person name="Huminiecki L."/>
            <person name="Iacono M."/>
            <person name="Ikeo K."/>
            <person name="Iwama A."/>
            <person name="Ishikawa T."/>
            <person name="Jakt M."/>
            <person name="Kanapin A."/>
            <person name="Katoh M."/>
            <person name="Kawasawa Y."/>
            <person name="Kelso J."/>
            <person name="Kitamura H."/>
            <person name="Kitano H."/>
            <person name="Kollias G."/>
            <person name="Krishnan S.P."/>
            <person name="Kruger A."/>
            <person name="Kummerfeld S.K."/>
            <person name="Kurochkin I.V."/>
            <person name="Lareau L.F."/>
            <person name="Lazarevic D."/>
            <person name="Lipovich L."/>
            <person name="Liu J."/>
            <person name="Liuni S."/>
            <person name="McWilliam S."/>
            <person name="Madan Babu M."/>
            <person name="Madera M."/>
            <person name="Marchionni L."/>
            <person name="Matsuda H."/>
            <person name="Matsuzawa S."/>
            <person name="Miki H."/>
            <person name="Mignone F."/>
            <person name="Miyake S."/>
            <person name="Morris K."/>
            <person name="Mottagui-Tabar S."/>
            <person name="Mulder N."/>
            <person name="Nakano N."/>
            <person name="Nakauchi H."/>
            <person name="Ng P."/>
            <person name="Nilsson R."/>
            <person name="Nishiguchi S."/>
            <person name="Nishikawa S."/>
            <person name="Nori F."/>
            <person name="Ohara O."/>
            <person name="Okazaki Y."/>
            <person name="Orlando V."/>
            <person name="Pang K.C."/>
            <person name="Pavan W.J."/>
            <person name="Pavesi G."/>
            <person name="Pesole G."/>
            <person name="Petrovsky N."/>
            <person name="Piazza S."/>
            <person name="Reed J."/>
            <person name="Reid J.F."/>
            <person name="Ring B.Z."/>
            <person name="Ringwald M."/>
            <person name="Rost B."/>
            <person name="Ruan Y."/>
            <person name="Salzberg S.L."/>
            <person name="Sandelin A."/>
            <person name="Schneider C."/>
            <person name="Schoenbach C."/>
            <person name="Sekiguchi K."/>
            <person name="Semple C.A."/>
            <person name="Seno S."/>
            <person name="Sessa L."/>
            <person name="Sheng Y."/>
            <person name="Shibata Y."/>
            <person name="Shimada H."/>
            <person name="Shimada K."/>
            <person name="Silva D."/>
            <person name="Sinclair B."/>
            <person name="Sperling S."/>
            <person name="Stupka E."/>
            <person name="Sugiura K."/>
            <person name="Sultana R."/>
            <person name="Takenaka Y."/>
            <person name="Taki K."/>
            <person name="Tammoja K."/>
            <person name="Tan S.L."/>
            <person name="Tang S."/>
            <person name="Taylor M.S."/>
            <person name="Tegner J."/>
            <person name="Teichmann S.A."/>
            <person name="Ueda H.R."/>
            <person name="van Nimwegen E."/>
            <person name="Verardo R."/>
            <person name="Wei C.L."/>
            <person name="Yagi K."/>
            <person name="Yamanishi H."/>
            <person name="Zabarovsky E."/>
            <person name="Zhu S."/>
            <person name="Zimmer A."/>
            <person name="Hide W."/>
            <person name="Bult C."/>
            <person name="Grimmond S.M."/>
            <person name="Teasdale R.D."/>
            <person name="Liu E.T."/>
            <person name="Brusic V."/>
            <person name="Quackenbush J."/>
            <person name="Wahlestedt C."/>
            <person name="Mattick J.S."/>
            <person name="Hume D.A."/>
            <person name="Kai C."/>
            <person name="Sasaki D."/>
            <person name="Tomaru Y."/>
            <person name="Fukuda S."/>
            <person name="Kanamori-Katayama M."/>
            <person name="Suzuki M."/>
            <person name="Aoki J."/>
            <person name="Arakawa T."/>
            <person name="Iida J."/>
            <person name="Imamura K."/>
            <person name="Itoh M."/>
            <person name="Kato T."/>
            <person name="Kawaji H."/>
            <person name="Kawagashira N."/>
            <person name="Kawashima T."/>
            <person name="Kojima M."/>
            <person name="Kondo S."/>
            <person name="Konno H."/>
            <person name="Nakano K."/>
            <person name="Ninomiya N."/>
            <person name="Nishio T."/>
            <person name="Okada M."/>
            <person name="Plessy C."/>
            <person name="Shibata K."/>
            <person name="Shiraki T."/>
            <person name="Suzuki S."/>
            <person name="Tagami M."/>
            <person name="Waki K."/>
            <person name="Watahiki A."/>
            <person name="Okamura-Oho Y."/>
            <person name="Suzuki H."/>
            <person name="Kawai J."/>
            <person name="Hayashizaki Y."/>
        </authorList>
    </citation>
    <scope>NUCLEOTIDE SEQUENCE [LARGE SCALE MRNA] (ISOFORMS 1 AND 2)</scope>
    <source>
        <strain>C57BL/6J</strain>
        <strain>NOD</strain>
        <tissue>Testis</tissue>
    </source>
</reference>
<reference key="3">
    <citation type="journal article" date="2009" name="PLoS Biol.">
        <title>Lineage-specific biology revealed by a finished genome assembly of the mouse.</title>
        <authorList>
            <person name="Church D.M."/>
            <person name="Goodstadt L."/>
            <person name="Hillier L.W."/>
            <person name="Zody M.C."/>
            <person name="Goldstein S."/>
            <person name="She X."/>
            <person name="Bult C.J."/>
            <person name="Agarwala R."/>
            <person name="Cherry J.L."/>
            <person name="DiCuccio M."/>
            <person name="Hlavina W."/>
            <person name="Kapustin Y."/>
            <person name="Meric P."/>
            <person name="Maglott D."/>
            <person name="Birtle Z."/>
            <person name="Marques A.C."/>
            <person name="Graves T."/>
            <person name="Zhou S."/>
            <person name="Teague B."/>
            <person name="Potamousis K."/>
            <person name="Churas C."/>
            <person name="Place M."/>
            <person name="Herschleb J."/>
            <person name="Runnheim R."/>
            <person name="Forrest D."/>
            <person name="Amos-Landgraf J."/>
            <person name="Schwartz D.C."/>
            <person name="Cheng Z."/>
            <person name="Lindblad-Toh K."/>
            <person name="Eichler E.E."/>
            <person name="Ponting C.P."/>
        </authorList>
    </citation>
    <scope>NUCLEOTIDE SEQUENCE [LARGE SCALE GENOMIC DNA]</scope>
    <source>
        <strain>C57BL/6J</strain>
    </source>
</reference>
<reference key="4">
    <citation type="submission" date="2005-07" db="EMBL/GenBank/DDBJ databases">
        <authorList>
            <person name="Mural R.J."/>
            <person name="Adams M.D."/>
            <person name="Myers E.W."/>
            <person name="Smith H.O."/>
            <person name="Venter J.C."/>
        </authorList>
    </citation>
    <scope>NUCLEOTIDE SEQUENCE [LARGE SCALE GENOMIC DNA]</scope>
</reference>
<reference key="5">
    <citation type="journal article" date="2004" name="Genome Res.">
        <title>The status, quality, and expansion of the NIH full-length cDNA project: the Mammalian Gene Collection (MGC).</title>
        <authorList>
            <consortium name="The MGC Project Team"/>
        </authorList>
    </citation>
    <scope>NUCLEOTIDE SEQUENCE [LARGE SCALE MRNA] (ISOFORM 1)</scope>
    <source>
        <tissue>Liver</tissue>
    </source>
</reference>
<reference key="6">
    <citation type="journal article" date="2010" name="Cell">
        <title>A tissue-specific atlas of mouse protein phosphorylation and expression.</title>
        <authorList>
            <person name="Huttlin E.L."/>
            <person name="Jedrychowski M.P."/>
            <person name="Elias J.E."/>
            <person name="Goswami T."/>
            <person name="Rad R."/>
            <person name="Beausoleil S.A."/>
            <person name="Villen J."/>
            <person name="Haas W."/>
            <person name="Sowa M.E."/>
            <person name="Gygi S.P."/>
        </authorList>
    </citation>
    <scope>IDENTIFICATION BY MASS SPECTROMETRY [LARGE SCALE ANALYSIS]</scope>
    <source>
        <tissue>Testis</tissue>
    </source>
</reference>
<reference key="7">
    <citation type="journal article" date="2013" name="Nat. Cell Biol.">
        <title>SCF(Fbxw5) mediates transient degradation of actin remodeller Eps8 to allow proper mitotic progression.</title>
        <authorList>
            <person name="Werner A."/>
            <person name="Disanza A."/>
            <person name="Reifenberger N."/>
            <person name="Habeck G."/>
            <person name="Becker J."/>
            <person name="Calabrese M."/>
            <person name="Urlaub H."/>
            <person name="Lorenz H."/>
            <person name="Schulman B."/>
            <person name="Scita G."/>
            <person name="Melchior F."/>
        </authorList>
    </citation>
    <scope>FUNCTION</scope>
    <scope>INTERACTION WITH EPS8</scope>
</reference>
<reference key="8">
    <citation type="journal article" date="2014" name="J. Neurochem.">
        <title>Tnfaip8 l1/Oxi-beta binds to FBXW5, increasing autophagy through activation of TSC2 in a Parkinson's disease model.</title>
        <authorList>
            <person name="Ha J.Y."/>
            <person name="Kim J.S."/>
            <person name="Kang Y.H."/>
            <person name="Bok E."/>
            <person name="Kim Y.S."/>
            <person name="Son J.H."/>
        </authorList>
    </citation>
    <scope>INTERACTION WITH TNFAIP8L1</scope>
</reference>
<evidence type="ECO:0000250" key="1"/>
<evidence type="ECO:0000250" key="2">
    <source>
        <dbReference type="UniProtKB" id="Q969U6"/>
    </source>
</evidence>
<evidence type="ECO:0000255" key="3">
    <source>
        <dbReference type="PROSITE-ProRule" id="PRU00080"/>
    </source>
</evidence>
<evidence type="ECO:0000269" key="4">
    <source>
    </source>
</evidence>
<evidence type="ECO:0000269" key="5">
    <source>
    </source>
</evidence>
<evidence type="ECO:0000269" key="6">
    <source>
    </source>
</evidence>
<evidence type="ECO:0000303" key="7">
    <source>
    </source>
</evidence>
<evidence type="ECO:0000305" key="8"/>
<dbReference type="EMBL" id="AF176520">
    <property type="protein sequence ID" value="AAF09130.1"/>
    <property type="molecule type" value="mRNA"/>
</dbReference>
<dbReference type="EMBL" id="AK019715">
    <property type="protein sequence ID" value="BAB31841.1"/>
    <property type="molecule type" value="mRNA"/>
</dbReference>
<dbReference type="EMBL" id="AK154911">
    <property type="protein sequence ID" value="BAE32921.1"/>
    <property type="molecule type" value="mRNA"/>
</dbReference>
<dbReference type="EMBL" id="AL732557">
    <property type="protein sequence ID" value="CAM25629.1"/>
    <property type="molecule type" value="Genomic_DNA"/>
</dbReference>
<dbReference type="EMBL" id="AL732557">
    <property type="protein sequence ID" value="CAM25630.1"/>
    <property type="status" value="ALT_SEQ"/>
    <property type="molecule type" value="Genomic_DNA"/>
</dbReference>
<dbReference type="EMBL" id="CH466542">
    <property type="protein sequence ID" value="EDL08255.1"/>
    <property type="molecule type" value="Genomic_DNA"/>
</dbReference>
<dbReference type="EMBL" id="BC010776">
    <property type="protein sequence ID" value="AAH10776.1"/>
    <property type="molecule type" value="mRNA"/>
</dbReference>
<dbReference type="CCDS" id="CCDS15778.1">
    <molecule id="Q9QXW2-1"/>
</dbReference>
<dbReference type="RefSeq" id="NP_038936.1">
    <molecule id="Q9QXW2-1"/>
    <property type="nucleotide sequence ID" value="NM_013908.5"/>
</dbReference>
<dbReference type="BioGRID" id="205976">
    <property type="interactions" value="5"/>
</dbReference>
<dbReference type="DIP" id="DIP-60700N"/>
<dbReference type="FunCoup" id="Q9QXW2">
    <property type="interactions" value="312"/>
</dbReference>
<dbReference type="IntAct" id="Q9QXW2">
    <property type="interactions" value="1"/>
</dbReference>
<dbReference type="STRING" id="10090.ENSMUSP00000015239"/>
<dbReference type="GlyGen" id="Q9QXW2">
    <property type="glycosylation" value="1 site, 1 N-linked glycan (1 site)"/>
</dbReference>
<dbReference type="iPTMnet" id="Q9QXW2"/>
<dbReference type="PhosphoSitePlus" id="Q9QXW2"/>
<dbReference type="SwissPalm" id="Q9QXW2"/>
<dbReference type="PaxDb" id="10090-ENSMUSP00000015239"/>
<dbReference type="ProteomicsDB" id="267720">
    <molecule id="Q9QXW2-1"/>
</dbReference>
<dbReference type="ProteomicsDB" id="267721">
    <molecule id="Q9QXW2-2"/>
</dbReference>
<dbReference type="Pumba" id="Q9QXW2"/>
<dbReference type="Antibodypedia" id="32276">
    <property type="antibodies" value="157 antibodies from 23 providers"/>
</dbReference>
<dbReference type="DNASU" id="30839"/>
<dbReference type="Ensembl" id="ENSMUST00000015239.10">
    <molecule id="Q9QXW2-1"/>
    <property type="protein sequence ID" value="ENSMUSP00000015239.4"/>
    <property type="gene ID" value="ENSMUSG00000015095.13"/>
</dbReference>
<dbReference type="GeneID" id="30839"/>
<dbReference type="KEGG" id="mmu:30839"/>
<dbReference type="UCSC" id="uc008isj.1">
    <molecule id="Q9QXW2-1"/>
    <property type="organism name" value="mouse"/>
</dbReference>
<dbReference type="UCSC" id="uc008isk.1">
    <molecule id="Q9QXW2-2"/>
    <property type="organism name" value="mouse"/>
</dbReference>
<dbReference type="AGR" id="MGI:1354731"/>
<dbReference type="CTD" id="54461"/>
<dbReference type="MGI" id="MGI:1354731">
    <property type="gene designation" value="Fbxw5"/>
</dbReference>
<dbReference type="VEuPathDB" id="HostDB:ENSMUSG00000015095"/>
<dbReference type="eggNOG" id="ENOG502QTGQ">
    <property type="taxonomic scope" value="Eukaryota"/>
</dbReference>
<dbReference type="GeneTree" id="ENSGT00730000111276"/>
<dbReference type="HOGENOM" id="CLU_021121_0_0_1"/>
<dbReference type="InParanoid" id="Q9QXW2"/>
<dbReference type="OMA" id="NPRDSEM"/>
<dbReference type="OrthoDB" id="192402at2759"/>
<dbReference type="PhylomeDB" id="Q9QXW2"/>
<dbReference type="TreeFam" id="TF324320"/>
<dbReference type="Reactome" id="R-MMU-8951664">
    <property type="pathway name" value="Neddylation"/>
</dbReference>
<dbReference type="Reactome" id="R-MMU-983168">
    <property type="pathway name" value="Antigen processing: Ubiquitination &amp; Proteasome degradation"/>
</dbReference>
<dbReference type="UniPathway" id="UPA00143"/>
<dbReference type="BioGRID-ORCS" id="30839">
    <property type="hits" value="5 hits in 77 CRISPR screens"/>
</dbReference>
<dbReference type="ChiTaRS" id="Fbxw5">
    <property type="organism name" value="mouse"/>
</dbReference>
<dbReference type="PRO" id="PR:Q9QXW2"/>
<dbReference type="Proteomes" id="UP000000589">
    <property type="component" value="Chromosome 2"/>
</dbReference>
<dbReference type="RNAct" id="Q9QXW2">
    <property type="molecule type" value="protein"/>
</dbReference>
<dbReference type="Bgee" id="ENSMUSG00000015095">
    <property type="expression patterns" value="Expressed in spermatocyte and 242 other cell types or tissues"/>
</dbReference>
<dbReference type="ExpressionAtlas" id="Q9QXW2">
    <property type="expression patterns" value="baseline and differential"/>
</dbReference>
<dbReference type="GO" id="GO:0080008">
    <property type="term" value="C:Cul4-RING E3 ubiquitin ligase complex"/>
    <property type="evidence" value="ECO:0000250"/>
    <property type="project" value="UniProtKB"/>
</dbReference>
<dbReference type="GO" id="GO:0005737">
    <property type="term" value="C:cytoplasm"/>
    <property type="evidence" value="ECO:0000250"/>
    <property type="project" value="UniProtKB"/>
</dbReference>
<dbReference type="GO" id="GO:0019005">
    <property type="term" value="C:SCF ubiquitin ligase complex"/>
    <property type="evidence" value="ECO:0000314"/>
    <property type="project" value="UniProtKB"/>
</dbReference>
<dbReference type="GO" id="GO:0019901">
    <property type="term" value="F:protein kinase binding"/>
    <property type="evidence" value="ECO:0007669"/>
    <property type="project" value="Ensembl"/>
</dbReference>
<dbReference type="GO" id="GO:0043161">
    <property type="term" value="P:proteasome-mediated ubiquitin-dependent protein catabolic process"/>
    <property type="evidence" value="ECO:0000250"/>
    <property type="project" value="UniProtKB"/>
</dbReference>
<dbReference type="GO" id="GO:0016567">
    <property type="term" value="P:protein ubiquitination"/>
    <property type="evidence" value="ECO:0000314"/>
    <property type="project" value="UniProtKB"/>
</dbReference>
<dbReference type="GO" id="GO:0010824">
    <property type="term" value="P:regulation of centrosome duplication"/>
    <property type="evidence" value="ECO:0000250"/>
    <property type="project" value="UniProtKB"/>
</dbReference>
<dbReference type="GO" id="GO:0007088">
    <property type="term" value="P:regulation of mitotic nuclear division"/>
    <property type="evidence" value="ECO:0000314"/>
    <property type="project" value="UniProtKB"/>
</dbReference>
<dbReference type="GO" id="GO:0031146">
    <property type="term" value="P:SCF-dependent proteasomal ubiquitin-dependent protein catabolic process"/>
    <property type="evidence" value="ECO:0000314"/>
    <property type="project" value="UniProtKB"/>
</dbReference>
<dbReference type="CDD" id="cd22132">
    <property type="entry name" value="F-box_FBXW5"/>
    <property type="match status" value="1"/>
</dbReference>
<dbReference type="FunFam" id="1.20.1280.50:FF:000032">
    <property type="entry name" value="F-box/WD repeat-containing protein 5 isoform X1"/>
    <property type="match status" value="1"/>
</dbReference>
<dbReference type="FunFam" id="2.130.10.10:FF:000305">
    <property type="entry name" value="F-box/WD repeat-containing protein 5 isoform X1"/>
    <property type="match status" value="1"/>
</dbReference>
<dbReference type="FunFam" id="2.130.10.10:FF:000335">
    <property type="entry name" value="F-box/WD repeat-containing protein 5 isoform X1"/>
    <property type="match status" value="1"/>
</dbReference>
<dbReference type="Gene3D" id="1.20.1280.50">
    <property type="match status" value="1"/>
</dbReference>
<dbReference type="Gene3D" id="2.130.10.10">
    <property type="entry name" value="YVTN repeat-like/Quinoprotein amine dehydrogenase"/>
    <property type="match status" value="2"/>
</dbReference>
<dbReference type="InterPro" id="IPR036047">
    <property type="entry name" value="F-box-like_dom_sf"/>
</dbReference>
<dbReference type="InterPro" id="IPR001810">
    <property type="entry name" value="F-box_dom"/>
</dbReference>
<dbReference type="InterPro" id="IPR042508">
    <property type="entry name" value="FBXW5"/>
</dbReference>
<dbReference type="InterPro" id="IPR015943">
    <property type="entry name" value="WD40/YVTN_repeat-like_dom_sf"/>
</dbReference>
<dbReference type="InterPro" id="IPR036322">
    <property type="entry name" value="WD40_repeat_dom_sf"/>
</dbReference>
<dbReference type="InterPro" id="IPR001680">
    <property type="entry name" value="WD40_rpt"/>
</dbReference>
<dbReference type="PANTHER" id="PTHR20995">
    <property type="entry name" value="F-BOX/WD REPEAT-CONTAINING PROTEIN 5"/>
    <property type="match status" value="1"/>
</dbReference>
<dbReference type="PANTHER" id="PTHR20995:SF17">
    <property type="entry name" value="F-BOX_WD REPEAT-CONTAINING PROTEIN 5"/>
    <property type="match status" value="1"/>
</dbReference>
<dbReference type="Pfam" id="PF12937">
    <property type="entry name" value="F-box-like"/>
    <property type="match status" value="1"/>
</dbReference>
<dbReference type="Pfam" id="PF00400">
    <property type="entry name" value="WD40"/>
    <property type="match status" value="2"/>
</dbReference>
<dbReference type="SMART" id="SM00256">
    <property type="entry name" value="FBOX"/>
    <property type="match status" value="1"/>
</dbReference>
<dbReference type="SMART" id="SM00320">
    <property type="entry name" value="WD40"/>
    <property type="match status" value="3"/>
</dbReference>
<dbReference type="SUPFAM" id="SSF81383">
    <property type="entry name" value="F-box domain"/>
    <property type="match status" value="1"/>
</dbReference>
<dbReference type="SUPFAM" id="SSF50978">
    <property type="entry name" value="WD40 repeat-like"/>
    <property type="match status" value="1"/>
</dbReference>
<dbReference type="PROSITE" id="PS50181">
    <property type="entry name" value="FBOX"/>
    <property type="match status" value="1"/>
</dbReference>
<dbReference type="PROSITE" id="PS50082">
    <property type="entry name" value="WD_REPEATS_2"/>
    <property type="match status" value="2"/>
</dbReference>
<dbReference type="PROSITE" id="PS50294">
    <property type="entry name" value="WD_REPEATS_REGION"/>
    <property type="match status" value="2"/>
</dbReference>
<name>FBXW5_MOUSE</name>
<protein>
    <recommendedName>
        <fullName>F-box/WD repeat-containing protein 5</fullName>
    </recommendedName>
    <alternativeName>
        <fullName>F-box and WD-40 domain-containing protein 5</fullName>
    </alternativeName>
</protein>
<feature type="chain" id="PRO_0000050993" description="F-box/WD repeat-containing protein 5">
    <location>
        <begin position="1"/>
        <end position="573"/>
    </location>
</feature>
<feature type="domain" description="F-box" evidence="3">
    <location>
        <begin position="3"/>
        <end position="49"/>
    </location>
</feature>
<feature type="repeat" description="WD 1">
    <location>
        <begin position="90"/>
        <end position="129"/>
    </location>
</feature>
<feature type="repeat" description="WD 2">
    <location>
        <begin position="470"/>
        <end position="509"/>
    </location>
</feature>
<feature type="repeat" description="WD 3">
    <location>
        <begin position="511"/>
        <end position="551"/>
    </location>
</feature>
<feature type="short sequence motif" description="D-box">
    <location>
        <begin position="308"/>
        <end position="316"/>
    </location>
</feature>
<feature type="modified residue" description="Phosphoserine; by PLK4" evidence="2">
    <location>
        <position position="151"/>
    </location>
</feature>
<feature type="splice variant" id="VSP_042293" description="In isoform 2." evidence="7">
    <original>M</original>
    <variation>MLSAVEFSGGQLVGLARTAMSGTPDYQSLPGVGDEEAWVQSRHWWVSGPSGQNVTM</variation>
    <location>
        <position position="1"/>
    </location>
</feature>
<feature type="splice variant" id="VSP_042294" description="In isoform 2." evidence="7">
    <original>LTASDDATIKAWRSPRIVRVLQAPRPRPRPRPRPFFSWFASHRR</original>
    <variation>PDSQRRCHYQSLAFTTHCSCSAGSTPSPPPSPPPLLLLVCQP</variation>
    <location>
        <begin position="530"/>
        <end position="573"/>
    </location>
</feature>
<gene>
    <name type="primary">Fbxw5</name>
    <name type="synonym">Fbw5</name>
</gene>
<proteinExistence type="evidence at protein level"/>
<organism>
    <name type="scientific">Mus musculus</name>
    <name type="common">Mouse</name>
    <dbReference type="NCBI Taxonomy" id="10090"/>
    <lineage>
        <taxon>Eukaryota</taxon>
        <taxon>Metazoa</taxon>
        <taxon>Chordata</taxon>
        <taxon>Craniata</taxon>
        <taxon>Vertebrata</taxon>
        <taxon>Euteleostomi</taxon>
        <taxon>Mammalia</taxon>
        <taxon>Eutheria</taxon>
        <taxon>Euarchontoglires</taxon>
        <taxon>Glires</taxon>
        <taxon>Rodentia</taxon>
        <taxon>Myomorpha</taxon>
        <taxon>Muroidea</taxon>
        <taxon>Muridae</taxon>
        <taxon>Murinae</taxon>
        <taxon>Mus</taxon>
        <taxon>Mus</taxon>
    </lineage>
</organism>
<comment type="function">
    <text evidence="1 5">Substrate recognition component of both SCF (SKP1-CUL1-F-box protein) and DCX (DDB1-CUL4-X-box) E3 ubiquitin-protein ligase complexes. Substrate-specific adapter of the DCX(FBXW5) E3 ubiquitin-protein ligase complex which mediates the polyubiquitination and subsequent degradation of TSC2. May also act as a negative regulator of MAP3K7/TAK1 signaling in the interleukin-1B (IL1B) signaling pathway. Substrate recognition component of the SCF(FBXW5) E3 ubiquitin-protein ligase complex which mediates the ubiquitination and subsequent proteasomal degradation of SASS6 during S phase, leading to prevent centriole reduplication (By similarity). The SCF(FBXW5) complex also mediates ubiquitination and degradation of actin-regulator EPS8 during G2 phase, leading to the transient degradation of EPS8 and subsequent cell shape changes required to allow mitotic progression.</text>
</comment>
<comment type="pathway">
    <text>Protein modification; protein ubiquitination.</text>
</comment>
<comment type="subunit">
    <text evidence="1 4 5 6">Part of the SCF (SKP1-CUL1-F-box) E3 ubiquitin-protein ligase complex SCF(FBXW5) composed of CUL1, SKP1, RBX1 and FBXW5. Component of the DCX(FBXW5) E3 ubiquitin ligase complex, at least composed of (CUL4A or CUL4B), DDB1, FBXW5 and RBX1. Interacts with CDC20, TSC1, TSC2 and SASS6 (By similarity). Interacts with EPS8. Interacts with TNFAIP8L1; TNFAIP8L1 competes with TSC2 to bind FBXW5 increasing TSC2 stability by preventing its ubiquitination.</text>
</comment>
<comment type="interaction">
    <interactant intactId="EBI-16031930">
        <id>Q9QXW2</id>
    </interactant>
    <interactant intactId="EBI-1202363">
        <id>Q9WTX5</id>
        <label>Skp1</label>
    </interactant>
    <organismsDiffer>false</organismsDiffer>
    <experiments>2</experiments>
</comment>
<comment type="subcellular location">
    <subcellularLocation>
        <location evidence="2">Cytoplasm</location>
    </subcellularLocation>
</comment>
<comment type="alternative products">
    <event type="alternative splicing"/>
    <isoform>
        <id>Q9QXW2-1</id>
        <name>1</name>
        <sequence type="displayed"/>
    </isoform>
    <isoform>
        <id>Q9QXW2-2</id>
        <name>2</name>
        <sequence type="described" ref="VSP_042293 VSP_042294"/>
    </isoform>
</comment>
<comment type="tissue specificity">
    <text evidence="4">Widely expressed in adult and embryonal tissues.</text>
</comment>
<comment type="domain">
    <text evidence="1">The F-box domain mediates interaction with components of SCF (SKP1-CUL1-F-box protein) complexes, while WD repeats mediate interaction with components of DCX (DDB1-CUL4-X-box) complexes.</text>
</comment>
<comment type="domain">
    <text evidence="1">The D-box (destruction box) mediate the interaction with APC proteins, and acts as a recognition signal for degradation via the ubiquitin-proteasome pathway.</text>
</comment>
<comment type="PTM">
    <text evidence="1">Phosphorylated at Ser-151 by PLK4 during the G1/S transition, leading to inhibit its ability to ubiquitinate SASS6.</text>
</comment>
<comment type="PTM">
    <text evidence="1">Ubiquitinated and degraded by the APC/C complex during mitosis and G1 phase.</text>
</comment>
<comment type="similarity">
    <text evidence="8">Belongs to the FBXW5 family.</text>
</comment>
<comment type="sequence caution" evidence="8">
    <conflict type="erroneous gene model prediction">
        <sequence resource="EMBL-CDS" id="CAM25630"/>
    </conflict>
</comment>